<organism>
    <name type="scientific">Eremothecium gossypii (strain ATCC 10895 / CBS 109.51 / FGSC 9923 / NRRL Y-1056)</name>
    <name type="common">Yeast</name>
    <name type="synonym">Ashbya gossypii</name>
    <dbReference type="NCBI Taxonomy" id="284811"/>
    <lineage>
        <taxon>Eukaryota</taxon>
        <taxon>Fungi</taxon>
        <taxon>Dikarya</taxon>
        <taxon>Ascomycota</taxon>
        <taxon>Saccharomycotina</taxon>
        <taxon>Saccharomycetes</taxon>
        <taxon>Saccharomycetales</taxon>
        <taxon>Saccharomycetaceae</taxon>
        <taxon>Eremothecium</taxon>
    </lineage>
</organism>
<protein>
    <recommendedName>
        <fullName>Protein SWT21</fullName>
    </recommendedName>
</protein>
<comment type="function">
    <text evidence="1">Involved in mRNA splicing. Helps to stabilize the U1 snRNP-5' splice site interaction (By similarity).</text>
</comment>
<comment type="subunit">
    <text evidence="1">Associates with snRNPs.</text>
</comment>
<comment type="subcellular location">
    <subcellularLocation>
        <location evidence="1">Nucleus</location>
    </subcellularLocation>
</comment>
<comment type="similarity">
    <text evidence="2">Belongs to the SWT21 family.</text>
</comment>
<evidence type="ECO:0000250" key="1"/>
<evidence type="ECO:0000305" key="2"/>
<feature type="chain" id="PRO_0000405682" description="Protein SWT21">
    <location>
        <begin position="1"/>
        <end position="407"/>
    </location>
</feature>
<reference key="1">
    <citation type="journal article" date="2004" name="Science">
        <title>The Ashbya gossypii genome as a tool for mapping the ancient Saccharomyces cerevisiae genome.</title>
        <authorList>
            <person name="Dietrich F.S."/>
            <person name="Voegeli S."/>
            <person name="Brachat S."/>
            <person name="Lerch A."/>
            <person name="Gates K."/>
            <person name="Steiner S."/>
            <person name="Mohr C."/>
            <person name="Poehlmann R."/>
            <person name="Luedi P."/>
            <person name="Choi S."/>
            <person name="Wing R.A."/>
            <person name="Flavier A."/>
            <person name="Gaffney T.D."/>
            <person name="Philippsen P."/>
        </authorList>
    </citation>
    <scope>NUCLEOTIDE SEQUENCE [LARGE SCALE GENOMIC DNA]</scope>
    <source>
        <strain>ATCC 10895 / CBS 109.51 / FGSC 9923 / NRRL Y-1056</strain>
    </source>
</reference>
<reference key="2">
    <citation type="journal article" date="2013" name="G3 (Bethesda)">
        <title>Genomes of Ashbya fungi isolated from insects reveal four mating-type loci, numerous translocations, lack of transposons, and distinct gene duplications.</title>
        <authorList>
            <person name="Dietrich F.S."/>
            <person name="Voegeli S."/>
            <person name="Kuo S."/>
            <person name="Philippsen P."/>
        </authorList>
    </citation>
    <scope>GENOME REANNOTATION</scope>
    <source>
        <strain>ATCC 10895 / CBS 109.51 / FGSC 9923 / NRRL Y-1056</strain>
    </source>
</reference>
<keyword id="KW-0507">mRNA processing</keyword>
<keyword id="KW-0508">mRNA splicing</keyword>
<keyword id="KW-0539">Nucleus</keyword>
<keyword id="KW-1185">Reference proteome</keyword>
<dbReference type="EMBL" id="AE016815">
    <property type="protein sequence ID" value="AAS50624.1"/>
    <property type="molecule type" value="Genomic_DNA"/>
</dbReference>
<dbReference type="RefSeq" id="NP_982800.1">
    <property type="nucleotide sequence ID" value="NM_208153.1"/>
</dbReference>
<dbReference type="SMR" id="Q75E79"/>
<dbReference type="FunCoup" id="Q75E79">
    <property type="interactions" value="35"/>
</dbReference>
<dbReference type="STRING" id="284811.Q75E79"/>
<dbReference type="EnsemblFungi" id="AAS50624">
    <property type="protein sequence ID" value="AAS50624"/>
    <property type="gene ID" value="AGOS_ABL147W"/>
</dbReference>
<dbReference type="GeneID" id="4618880"/>
<dbReference type="KEGG" id="ago:AGOS_ABL147W"/>
<dbReference type="eggNOG" id="ENOG502QVPI">
    <property type="taxonomic scope" value="Eukaryota"/>
</dbReference>
<dbReference type="HOGENOM" id="CLU_662333_0_0_1"/>
<dbReference type="InParanoid" id="Q75E79"/>
<dbReference type="OMA" id="VICQDIF"/>
<dbReference type="OrthoDB" id="239865at2759"/>
<dbReference type="Proteomes" id="UP000000591">
    <property type="component" value="Chromosome II"/>
</dbReference>
<dbReference type="GO" id="GO:0005634">
    <property type="term" value="C:nucleus"/>
    <property type="evidence" value="ECO:0007669"/>
    <property type="project" value="UniProtKB-SubCell"/>
</dbReference>
<dbReference type="GO" id="GO:0006397">
    <property type="term" value="P:mRNA processing"/>
    <property type="evidence" value="ECO:0007669"/>
    <property type="project" value="UniProtKB-KW"/>
</dbReference>
<dbReference type="GO" id="GO:0008380">
    <property type="term" value="P:RNA splicing"/>
    <property type="evidence" value="ECO:0007669"/>
    <property type="project" value="UniProtKB-KW"/>
</dbReference>
<dbReference type="Gene3D" id="2.130.10.10">
    <property type="entry name" value="YVTN repeat-like/Quinoprotein amine dehydrogenase"/>
    <property type="match status" value="1"/>
</dbReference>
<dbReference type="InterPro" id="IPR051150">
    <property type="entry name" value="SWT21/TCAB1_mRNA_Telomere"/>
</dbReference>
<dbReference type="InterPro" id="IPR015943">
    <property type="entry name" value="WD40/YVTN_repeat-like_dom_sf"/>
</dbReference>
<dbReference type="PANTHER" id="PTHR13211">
    <property type="entry name" value="TELOMERASE CAJAL BODY PROTEIN 1"/>
    <property type="match status" value="1"/>
</dbReference>
<dbReference type="PANTHER" id="PTHR13211:SF0">
    <property type="entry name" value="TELOMERASE CAJAL BODY PROTEIN 1"/>
    <property type="match status" value="1"/>
</dbReference>
<dbReference type="SUPFAM" id="SSF101898">
    <property type="entry name" value="NHL repeat"/>
    <property type="match status" value="1"/>
</dbReference>
<accession>Q75E79</accession>
<proteinExistence type="inferred from homology"/>
<gene>
    <name type="primary">SWT21</name>
    <name type="ordered locus">ABL147W</name>
</gene>
<name>SWT21_EREGS</name>
<sequence length="407" mass="45512">MNILAHTGDIFHGRGKLHASLKEQQVWDDLRRPGHDVPQLPRPQGYTASQPIYKRLPVVCRGLTWSFDGSSLVAVHEDCGIRQYAVCEEQGPVMAPVQRFFKPQAIISHAVHPQNSLFQADSSLNVVVVSCKDMPYQLYPLHSNPDQPARALQTYNSASESTEEFRAAYAMDFLDDAHFLAGSTRNTVSLFDASRRESIWVSSATRRGCGRGQHKAIVSCFDEANERRDCVRYAGTYRSELLRIDPRTSSISSWKAIQDKSRGIYQVLQSNNGHYFYIMKRYSNSITVLDSRKSMAIVNQFKLPFQTHAQKLRGTYSTRHGLLIGDEAGRILQWAPEVVEFGGIDRSGSVPSYGIGETGITHVCAEGSRINIIEKNPADSDIFAISYSPDKYGEDVSCNAGILLMRL</sequence>